<feature type="chain" id="PRO_0000060575" description="Cytochrome b">
    <location>
        <begin position="1"/>
        <end position="379"/>
    </location>
</feature>
<feature type="transmembrane region" description="Helical" evidence="2">
    <location>
        <begin position="33"/>
        <end position="53"/>
    </location>
</feature>
<feature type="transmembrane region" description="Helical" evidence="2">
    <location>
        <begin position="77"/>
        <end position="98"/>
    </location>
</feature>
<feature type="transmembrane region" description="Helical" evidence="2">
    <location>
        <begin position="113"/>
        <end position="133"/>
    </location>
</feature>
<feature type="transmembrane region" description="Helical" evidence="2">
    <location>
        <begin position="178"/>
        <end position="198"/>
    </location>
</feature>
<feature type="transmembrane region" description="Helical" evidence="2">
    <location>
        <begin position="226"/>
        <end position="246"/>
    </location>
</feature>
<feature type="transmembrane region" description="Helical" evidence="2">
    <location>
        <begin position="288"/>
        <end position="308"/>
    </location>
</feature>
<feature type="transmembrane region" description="Helical" evidence="2">
    <location>
        <begin position="320"/>
        <end position="340"/>
    </location>
</feature>
<feature type="transmembrane region" description="Helical" evidence="2">
    <location>
        <begin position="347"/>
        <end position="367"/>
    </location>
</feature>
<feature type="binding site" description="axial binding residue" evidence="2">
    <location>
        <position position="83"/>
    </location>
    <ligand>
        <name>heme b</name>
        <dbReference type="ChEBI" id="CHEBI:60344"/>
        <label>b562</label>
    </ligand>
    <ligandPart>
        <name>Fe</name>
        <dbReference type="ChEBI" id="CHEBI:18248"/>
    </ligandPart>
</feature>
<feature type="binding site" description="axial binding residue" evidence="2">
    <location>
        <position position="97"/>
    </location>
    <ligand>
        <name>heme b</name>
        <dbReference type="ChEBI" id="CHEBI:60344"/>
        <label>b566</label>
    </ligand>
    <ligandPart>
        <name>Fe</name>
        <dbReference type="ChEBI" id="CHEBI:18248"/>
    </ligandPart>
</feature>
<feature type="binding site" description="axial binding residue" evidence="2">
    <location>
        <position position="182"/>
    </location>
    <ligand>
        <name>heme b</name>
        <dbReference type="ChEBI" id="CHEBI:60344"/>
        <label>b562</label>
    </ligand>
    <ligandPart>
        <name>Fe</name>
        <dbReference type="ChEBI" id="CHEBI:18248"/>
    </ligandPart>
</feature>
<feature type="binding site" description="axial binding residue" evidence="2">
    <location>
        <position position="196"/>
    </location>
    <ligand>
        <name>heme b</name>
        <dbReference type="ChEBI" id="CHEBI:60344"/>
        <label>b566</label>
    </ligand>
    <ligandPart>
        <name>Fe</name>
        <dbReference type="ChEBI" id="CHEBI:18248"/>
    </ligandPart>
</feature>
<feature type="binding site" evidence="2">
    <location>
        <position position="201"/>
    </location>
    <ligand>
        <name>a ubiquinone</name>
        <dbReference type="ChEBI" id="CHEBI:16389"/>
    </ligand>
</feature>
<organism>
    <name type="scientific">Ammotragus lervia</name>
    <name type="common">Barbary sheep</name>
    <name type="synonym">Antilope lervia</name>
    <dbReference type="NCBI Taxonomy" id="9899"/>
    <lineage>
        <taxon>Eukaryota</taxon>
        <taxon>Metazoa</taxon>
        <taxon>Chordata</taxon>
        <taxon>Craniata</taxon>
        <taxon>Vertebrata</taxon>
        <taxon>Euteleostomi</taxon>
        <taxon>Mammalia</taxon>
        <taxon>Eutheria</taxon>
        <taxon>Laurasiatheria</taxon>
        <taxon>Artiodactyla</taxon>
        <taxon>Ruminantia</taxon>
        <taxon>Pecora</taxon>
        <taxon>Bovidae</taxon>
        <taxon>Caprinae</taxon>
        <taxon>Ammotragus</taxon>
    </lineage>
</organism>
<protein>
    <recommendedName>
        <fullName>Cytochrome b</fullName>
    </recommendedName>
    <alternativeName>
        <fullName>Complex III subunit 3</fullName>
    </alternativeName>
    <alternativeName>
        <fullName>Complex III subunit III</fullName>
    </alternativeName>
    <alternativeName>
        <fullName>Cytochrome b-c1 complex subunit 3</fullName>
    </alternativeName>
    <alternativeName>
        <fullName>Ubiquinol-cytochrome-c reductase complex cytochrome b subunit</fullName>
    </alternativeName>
</protein>
<gene>
    <name type="primary">MT-CYB</name>
    <name type="synonym">COB</name>
    <name type="synonym">CYTB</name>
    <name type="synonym">MTCYB</name>
</gene>
<comment type="function">
    <text evidence="2">Component of the ubiquinol-cytochrome c reductase complex (complex III or cytochrome b-c1 complex) that is part of the mitochondrial respiratory chain. The b-c1 complex mediates electron transfer from ubiquinol to cytochrome c. Contributes to the generation of a proton gradient across the mitochondrial membrane that is then used for ATP synthesis.</text>
</comment>
<comment type="cofactor">
    <cofactor evidence="2">
        <name>heme b</name>
        <dbReference type="ChEBI" id="CHEBI:60344"/>
    </cofactor>
    <text evidence="2">Binds 2 heme b groups non-covalently.</text>
</comment>
<comment type="subunit">
    <text evidence="2">The cytochrome bc1 complex contains 11 subunits: 3 respiratory subunits (MT-CYB, CYC1 and UQCRFS1), 2 core proteins (UQCRC1 and UQCRC2) and 6 low-molecular weight proteins (UQCRH/QCR6, UQCRB/QCR7, UQCRQ/QCR8, UQCR10/QCR9, UQCR11/QCR10 and a cleavage product of UQCRFS1). This cytochrome bc1 complex then forms a dimer.</text>
</comment>
<comment type="subcellular location">
    <subcellularLocation>
        <location evidence="2">Mitochondrion inner membrane</location>
        <topology evidence="2">Multi-pass membrane protein</topology>
    </subcellularLocation>
</comment>
<comment type="miscellaneous">
    <text evidence="1">Heme 1 (or BL or b562) is low-potential and absorbs at about 562 nm, and heme 2 (or BH or b566) is high-potential and absorbs at about 566 nm.</text>
</comment>
<comment type="similarity">
    <text evidence="3 4">Belongs to the cytochrome b family.</text>
</comment>
<comment type="caution">
    <text evidence="2">The full-length protein contains only eight transmembrane helices, not nine as predicted by bioinformatics tools.</text>
</comment>
<sequence length="379" mass="42785">MINIRKTHPLMKIVNNAFIDLPXPSNISSWWNFGSLLGICLILQILTGLFLAMHYTSDTMTAFSSVAHICRDVNYGWIIRYMHANGASMFFICLFMHVGRGLYYGSYTFLETWNVGVILLFATMATAFMGYVLPWGQMSFWGATVITNLLSAIPYIGTDLVEWIWGGFSVDKATLTRFFAFHFILPFVIAALAMVHLLFLHETGSNNPTGISSDADKIPFHPYYTIKDILGAMLLILTLTLLVLFTPDLLGDPDNYTPANPLNTPPHIKPEWYFLFAYAILRSIPNKLGGVLALVLSILILMLVPFLHTSKQRSMMFRPISQCMFWILVADLLTLTWIGGQPVENPYMIIGQLASIMYFLIILVMMPVASTIENNLLKW</sequence>
<evidence type="ECO:0000250" key="1"/>
<evidence type="ECO:0000250" key="2">
    <source>
        <dbReference type="UniProtKB" id="P00157"/>
    </source>
</evidence>
<evidence type="ECO:0000255" key="3">
    <source>
        <dbReference type="PROSITE-ProRule" id="PRU00967"/>
    </source>
</evidence>
<evidence type="ECO:0000255" key="4">
    <source>
        <dbReference type="PROSITE-ProRule" id="PRU00968"/>
    </source>
</evidence>
<name>CYB_AMMLE</name>
<geneLocation type="mitochondrion"/>
<reference key="1">
    <citation type="journal article" date="1998" name="J. Mammal. Evol.">
        <title>Molecular systematics of the subfamily Caprinae (Artiodactyla, Bovidae) as determined from cytochrome b sequences.</title>
        <authorList>
            <person name="Hassanin A."/>
            <person name="Pasquet E."/>
            <person name="Vigne J.-D."/>
        </authorList>
    </citation>
    <scope>NUCLEOTIDE SEQUENCE [GENOMIC DNA]</scope>
</reference>
<proteinExistence type="inferred from homology"/>
<accession>O78781</accession>
<dbReference type="EMBL" id="AF034731">
    <property type="protein sequence ID" value="AAC31686.1"/>
    <property type="molecule type" value="Genomic_DNA"/>
</dbReference>
<dbReference type="GO" id="GO:0005743">
    <property type="term" value="C:mitochondrial inner membrane"/>
    <property type="evidence" value="ECO:0007669"/>
    <property type="project" value="UniProtKB-SubCell"/>
</dbReference>
<dbReference type="GO" id="GO:0045275">
    <property type="term" value="C:respiratory chain complex III"/>
    <property type="evidence" value="ECO:0007669"/>
    <property type="project" value="InterPro"/>
</dbReference>
<dbReference type="GO" id="GO:0046872">
    <property type="term" value="F:metal ion binding"/>
    <property type="evidence" value="ECO:0007669"/>
    <property type="project" value="UniProtKB-KW"/>
</dbReference>
<dbReference type="GO" id="GO:0008121">
    <property type="term" value="F:ubiquinol-cytochrome-c reductase activity"/>
    <property type="evidence" value="ECO:0007669"/>
    <property type="project" value="InterPro"/>
</dbReference>
<dbReference type="GO" id="GO:0006122">
    <property type="term" value="P:mitochondrial electron transport, ubiquinol to cytochrome c"/>
    <property type="evidence" value="ECO:0007669"/>
    <property type="project" value="TreeGrafter"/>
</dbReference>
<dbReference type="CDD" id="cd00290">
    <property type="entry name" value="cytochrome_b_C"/>
    <property type="match status" value="1"/>
</dbReference>
<dbReference type="CDD" id="cd00284">
    <property type="entry name" value="Cytochrome_b_N"/>
    <property type="match status" value="1"/>
</dbReference>
<dbReference type="FunFam" id="1.20.810.10:FF:000002">
    <property type="entry name" value="Cytochrome b"/>
    <property type="match status" value="1"/>
</dbReference>
<dbReference type="Gene3D" id="1.20.810.10">
    <property type="entry name" value="Cytochrome Bc1 Complex, Chain C"/>
    <property type="match status" value="1"/>
</dbReference>
<dbReference type="InterPro" id="IPR005798">
    <property type="entry name" value="Cyt_b/b6_C"/>
</dbReference>
<dbReference type="InterPro" id="IPR036150">
    <property type="entry name" value="Cyt_b/b6_C_sf"/>
</dbReference>
<dbReference type="InterPro" id="IPR005797">
    <property type="entry name" value="Cyt_b/b6_N"/>
</dbReference>
<dbReference type="InterPro" id="IPR027387">
    <property type="entry name" value="Cytb/b6-like_sf"/>
</dbReference>
<dbReference type="InterPro" id="IPR030689">
    <property type="entry name" value="Cytochrome_b"/>
</dbReference>
<dbReference type="InterPro" id="IPR048260">
    <property type="entry name" value="Cytochrome_b_C_euk/bac"/>
</dbReference>
<dbReference type="InterPro" id="IPR048259">
    <property type="entry name" value="Cytochrome_b_N_euk/bac"/>
</dbReference>
<dbReference type="InterPro" id="IPR016174">
    <property type="entry name" value="Di-haem_cyt_TM"/>
</dbReference>
<dbReference type="PANTHER" id="PTHR19271">
    <property type="entry name" value="CYTOCHROME B"/>
    <property type="match status" value="1"/>
</dbReference>
<dbReference type="PANTHER" id="PTHR19271:SF16">
    <property type="entry name" value="CYTOCHROME B"/>
    <property type="match status" value="1"/>
</dbReference>
<dbReference type="Pfam" id="PF00032">
    <property type="entry name" value="Cytochrom_B_C"/>
    <property type="match status" value="1"/>
</dbReference>
<dbReference type="Pfam" id="PF00033">
    <property type="entry name" value="Cytochrome_B"/>
    <property type="match status" value="1"/>
</dbReference>
<dbReference type="PIRSF" id="PIRSF038885">
    <property type="entry name" value="COB"/>
    <property type="match status" value="1"/>
</dbReference>
<dbReference type="SUPFAM" id="SSF81648">
    <property type="entry name" value="a domain/subunit of cytochrome bc1 complex (Ubiquinol-cytochrome c reductase)"/>
    <property type="match status" value="1"/>
</dbReference>
<dbReference type="SUPFAM" id="SSF81342">
    <property type="entry name" value="Transmembrane di-heme cytochromes"/>
    <property type="match status" value="1"/>
</dbReference>
<dbReference type="PROSITE" id="PS51003">
    <property type="entry name" value="CYTB_CTER"/>
    <property type="match status" value="1"/>
</dbReference>
<dbReference type="PROSITE" id="PS51002">
    <property type="entry name" value="CYTB_NTER"/>
    <property type="match status" value="1"/>
</dbReference>
<keyword id="KW-0249">Electron transport</keyword>
<keyword id="KW-0349">Heme</keyword>
<keyword id="KW-0408">Iron</keyword>
<keyword id="KW-0472">Membrane</keyword>
<keyword id="KW-0479">Metal-binding</keyword>
<keyword id="KW-0496">Mitochondrion</keyword>
<keyword id="KW-0999">Mitochondrion inner membrane</keyword>
<keyword id="KW-0679">Respiratory chain</keyword>
<keyword id="KW-0812">Transmembrane</keyword>
<keyword id="KW-1133">Transmembrane helix</keyword>
<keyword id="KW-0813">Transport</keyword>
<keyword id="KW-0830">Ubiquinone</keyword>